<reference key="1">
    <citation type="journal article" date="2007" name="Theor. Appl. Genet.">
        <title>Complete chloroplast genome sequences of Hordeum vulgare, Sorghum bicolor and Agrostis stolonifera, and comparative analyses with other grass genomes.</title>
        <authorList>
            <person name="Saski C."/>
            <person name="Lee S.-B."/>
            <person name="Fjellheim S."/>
            <person name="Guda C."/>
            <person name="Jansen R.K."/>
            <person name="Luo H."/>
            <person name="Tomkins J."/>
            <person name="Rognli O.A."/>
            <person name="Daniell H."/>
            <person name="Clarke J.L."/>
        </authorList>
    </citation>
    <scope>NUCLEOTIDE SEQUENCE [LARGE SCALE GENOMIC DNA]</scope>
    <source>
        <strain>cv. BTx623</strain>
    </source>
</reference>
<gene>
    <name evidence="1" type="primary">psbJ</name>
</gene>
<comment type="function">
    <text evidence="1">One of the components of the core complex of photosystem II (PSII). PSII is a light-driven water:plastoquinone oxidoreductase that uses light energy to abstract electrons from H(2)O, generating O(2) and a proton gradient subsequently used for ATP formation. It consists of a core antenna complex that captures photons, and an electron transfer chain that converts photonic excitation into a charge separation.</text>
</comment>
<comment type="subunit">
    <text evidence="1">PSII is composed of 1 copy each of membrane proteins PsbA, PsbB, PsbC, PsbD, PsbE, PsbF, PsbH, PsbI, PsbJ, PsbK, PsbL, PsbM, PsbT, PsbX, PsbY, PsbZ, Psb30/Ycf12, at least 3 peripheral proteins of the oxygen-evolving complex and a large number of cofactors. It forms dimeric complexes.</text>
</comment>
<comment type="subcellular location">
    <subcellularLocation>
        <location evidence="1">Plastid</location>
        <location evidence="1">Chloroplast thylakoid membrane</location>
        <topology evidence="1">Single-pass membrane protein</topology>
    </subcellularLocation>
</comment>
<comment type="similarity">
    <text evidence="1">Belongs to the PsbJ family.</text>
</comment>
<organism>
    <name type="scientific">Sorghum bicolor</name>
    <name type="common">Sorghum</name>
    <name type="synonym">Sorghum vulgare</name>
    <dbReference type="NCBI Taxonomy" id="4558"/>
    <lineage>
        <taxon>Eukaryota</taxon>
        <taxon>Viridiplantae</taxon>
        <taxon>Streptophyta</taxon>
        <taxon>Embryophyta</taxon>
        <taxon>Tracheophyta</taxon>
        <taxon>Spermatophyta</taxon>
        <taxon>Magnoliopsida</taxon>
        <taxon>Liliopsida</taxon>
        <taxon>Poales</taxon>
        <taxon>Poaceae</taxon>
        <taxon>PACMAD clade</taxon>
        <taxon>Panicoideae</taxon>
        <taxon>Andropogonodae</taxon>
        <taxon>Andropogoneae</taxon>
        <taxon>Sorghinae</taxon>
        <taxon>Sorghum</taxon>
    </lineage>
</organism>
<proteinExistence type="inferred from homology"/>
<accession>A1E9T8</accession>
<evidence type="ECO:0000255" key="1">
    <source>
        <dbReference type="HAMAP-Rule" id="MF_01305"/>
    </source>
</evidence>
<sequence>MADTTGRIPLWLIGTVTGILVIGLIGVFFYGSYSGLGSSL</sequence>
<geneLocation type="chloroplast"/>
<keyword id="KW-0150">Chloroplast</keyword>
<keyword id="KW-0472">Membrane</keyword>
<keyword id="KW-0602">Photosynthesis</keyword>
<keyword id="KW-0604">Photosystem II</keyword>
<keyword id="KW-0934">Plastid</keyword>
<keyword id="KW-0674">Reaction center</keyword>
<keyword id="KW-1185">Reference proteome</keyword>
<keyword id="KW-0793">Thylakoid</keyword>
<keyword id="KW-0812">Transmembrane</keyword>
<keyword id="KW-1133">Transmembrane helix</keyword>
<name>PSBJ_SORBI</name>
<feature type="chain" id="PRO_0000276116" description="Photosystem II reaction center protein J">
    <location>
        <begin position="1"/>
        <end position="40"/>
    </location>
</feature>
<feature type="transmembrane region" description="Helical" evidence="1">
    <location>
        <begin position="8"/>
        <end position="28"/>
    </location>
</feature>
<protein>
    <recommendedName>
        <fullName evidence="1">Photosystem II reaction center protein J</fullName>
        <shortName evidence="1">PSII-J</shortName>
    </recommendedName>
</protein>
<dbReference type="EMBL" id="EF115542">
    <property type="protein sequence ID" value="ABK79510.1"/>
    <property type="molecule type" value="Genomic_DNA"/>
</dbReference>
<dbReference type="RefSeq" id="YP_899421.1">
    <property type="nucleotide sequence ID" value="NC_008602.1"/>
</dbReference>
<dbReference type="SMR" id="A1E9T8"/>
<dbReference type="FunCoup" id="A1E9T8">
    <property type="interactions" value="66"/>
</dbReference>
<dbReference type="STRING" id="4558.A1E9T8"/>
<dbReference type="EnsemblPlants" id="KXG36133">
    <property type="protein sequence ID" value="KXG36133"/>
    <property type="gene ID" value="SORBI_3002G288700"/>
</dbReference>
<dbReference type="GeneID" id="4549173"/>
<dbReference type="Gramene" id="KXG36133">
    <property type="protein sequence ID" value="KXG36133"/>
    <property type="gene ID" value="SORBI_3002G288700"/>
</dbReference>
<dbReference type="KEGG" id="sbi:4549173"/>
<dbReference type="InParanoid" id="A1E9T8"/>
<dbReference type="Proteomes" id="UP000000768">
    <property type="component" value="Chloroplast"/>
</dbReference>
<dbReference type="ExpressionAtlas" id="A1E9T8">
    <property type="expression patterns" value="baseline"/>
</dbReference>
<dbReference type="GO" id="GO:0009535">
    <property type="term" value="C:chloroplast thylakoid membrane"/>
    <property type="evidence" value="ECO:0007669"/>
    <property type="project" value="UniProtKB-SubCell"/>
</dbReference>
<dbReference type="GO" id="GO:0009523">
    <property type="term" value="C:photosystem II"/>
    <property type="evidence" value="ECO:0000318"/>
    <property type="project" value="GO_Central"/>
</dbReference>
<dbReference type="GO" id="GO:0009539">
    <property type="term" value="C:photosystem II reaction center"/>
    <property type="evidence" value="ECO:0007669"/>
    <property type="project" value="InterPro"/>
</dbReference>
<dbReference type="GO" id="GO:0015979">
    <property type="term" value="P:photosynthesis"/>
    <property type="evidence" value="ECO:0007669"/>
    <property type="project" value="UniProtKB-UniRule"/>
</dbReference>
<dbReference type="Gene3D" id="6.10.250.2070">
    <property type="match status" value="1"/>
</dbReference>
<dbReference type="HAMAP" id="MF_01305">
    <property type="entry name" value="PSII_PsbJ"/>
    <property type="match status" value="1"/>
</dbReference>
<dbReference type="InterPro" id="IPR002682">
    <property type="entry name" value="PSII_PsbJ"/>
</dbReference>
<dbReference type="InterPro" id="IPR037267">
    <property type="entry name" value="PSII_PsbJ_sf"/>
</dbReference>
<dbReference type="NCBIfam" id="NF002722">
    <property type="entry name" value="PRK02565.1"/>
    <property type="match status" value="1"/>
</dbReference>
<dbReference type="PANTHER" id="PTHR34812">
    <property type="entry name" value="PHOTOSYSTEM II REACTION CENTER PROTEIN J"/>
    <property type="match status" value="1"/>
</dbReference>
<dbReference type="PANTHER" id="PTHR34812:SF3">
    <property type="entry name" value="PHOTOSYSTEM II REACTION CENTER PROTEIN J"/>
    <property type="match status" value="1"/>
</dbReference>
<dbReference type="Pfam" id="PF01788">
    <property type="entry name" value="PsbJ"/>
    <property type="match status" value="1"/>
</dbReference>
<dbReference type="SUPFAM" id="SSF161021">
    <property type="entry name" value="Photosystem II reaction center protein J, PsbJ"/>
    <property type="match status" value="1"/>
</dbReference>